<accession>P0DPA1</accession>
<accession>Q54J59</accession>
<gene>
    <name type="ORF">DDB_G0349043</name>
</gene>
<dbReference type="EMBL" id="AAFI02000169">
    <property type="status" value="NOT_ANNOTATED_CDS"/>
    <property type="molecule type" value="Genomic_DNA"/>
</dbReference>
<dbReference type="SMR" id="P0DPA1"/>
<dbReference type="FunCoup" id="P0DPA1">
    <property type="interactions" value="394"/>
</dbReference>
<dbReference type="STRING" id="44689.P0DPA1"/>
<dbReference type="PaxDb" id="44689-DDB0219330"/>
<dbReference type="VEuPathDB" id="AmoebaDB:DDB_G0288313"/>
<dbReference type="eggNOG" id="KOG0293">
    <property type="taxonomic scope" value="Eukaryota"/>
</dbReference>
<dbReference type="InParanoid" id="P0DPA1"/>
<dbReference type="Proteomes" id="UP000002195">
    <property type="component" value="Chromosome 5"/>
</dbReference>
<dbReference type="GO" id="GO:0034657">
    <property type="term" value="C:GID complex"/>
    <property type="evidence" value="ECO:0000318"/>
    <property type="project" value="GO_Central"/>
</dbReference>
<dbReference type="GO" id="GO:0043161">
    <property type="term" value="P:proteasome-mediated ubiquitin-dependent protein catabolic process"/>
    <property type="evidence" value="ECO:0000318"/>
    <property type="project" value="GO_Central"/>
</dbReference>
<dbReference type="CDD" id="cd00200">
    <property type="entry name" value="WD40"/>
    <property type="match status" value="1"/>
</dbReference>
<dbReference type="Gene3D" id="2.130.10.10">
    <property type="entry name" value="YVTN repeat-like/Quinoprotein amine dehydrogenase"/>
    <property type="match status" value="2"/>
</dbReference>
<dbReference type="InterPro" id="IPR006595">
    <property type="entry name" value="CTLH_C"/>
</dbReference>
<dbReference type="InterPro" id="IPR020472">
    <property type="entry name" value="G-protein_beta_WD-40_rep"/>
</dbReference>
<dbReference type="InterPro" id="IPR006594">
    <property type="entry name" value="LisH"/>
</dbReference>
<dbReference type="InterPro" id="IPR054080">
    <property type="entry name" value="TPR1-like_2nd"/>
</dbReference>
<dbReference type="InterPro" id="IPR015943">
    <property type="entry name" value="WD40/YVTN_repeat-like_dom_sf"/>
</dbReference>
<dbReference type="InterPro" id="IPR019775">
    <property type="entry name" value="WD40_repeat_CS"/>
</dbReference>
<dbReference type="InterPro" id="IPR036322">
    <property type="entry name" value="WD40_repeat_dom_sf"/>
</dbReference>
<dbReference type="InterPro" id="IPR001680">
    <property type="entry name" value="WD40_rpt"/>
</dbReference>
<dbReference type="InterPro" id="IPR051350">
    <property type="entry name" value="WD_repeat-ST_regulator"/>
</dbReference>
<dbReference type="PANTHER" id="PTHR22838">
    <property type="entry name" value="WD REPEAT PROTEIN 26-RELATED"/>
    <property type="match status" value="1"/>
</dbReference>
<dbReference type="PANTHER" id="PTHR22838:SF0">
    <property type="entry name" value="WD REPEAT-CONTAINING PROTEIN 26"/>
    <property type="match status" value="1"/>
</dbReference>
<dbReference type="Pfam" id="PF23627">
    <property type="entry name" value="LisH_WDR26"/>
    <property type="match status" value="1"/>
</dbReference>
<dbReference type="Pfam" id="PF21889">
    <property type="entry name" value="TPR1-like_2nd"/>
    <property type="match status" value="1"/>
</dbReference>
<dbReference type="Pfam" id="PF00400">
    <property type="entry name" value="WD40"/>
    <property type="match status" value="5"/>
</dbReference>
<dbReference type="PRINTS" id="PR00320">
    <property type="entry name" value="GPROTEINBRPT"/>
</dbReference>
<dbReference type="SMART" id="SM00668">
    <property type="entry name" value="CTLH"/>
    <property type="match status" value="1"/>
</dbReference>
<dbReference type="SMART" id="SM00320">
    <property type="entry name" value="WD40"/>
    <property type="match status" value="7"/>
</dbReference>
<dbReference type="SUPFAM" id="SSF50978">
    <property type="entry name" value="WD40 repeat-like"/>
    <property type="match status" value="1"/>
</dbReference>
<dbReference type="PROSITE" id="PS50897">
    <property type="entry name" value="CTLH"/>
    <property type="match status" value="1"/>
</dbReference>
<dbReference type="PROSITE" id="PS50896">
    <property type="entry name" value="LISH"/>
    <property type="match status" value="1"/>
</dbReference>
<dbReference type="PROSITE" id="PS00678">
    <property type="entry name" value="WD_REPEATS_1"/>
    <property type="match status" value="2"/>
</dbReference>
<dbReference type="PROSITE" id="PS50082">
    <property type="entry name" value="WD_REPEATS_2"/>
    <property type="match status" value="5"/>
</dbReference>
<dbReference type="PROSITE" id="PS50294">
    <property type="entry name" value="WD_REPEATS_REGION"/>
    <property type="match status" value="1"/>
</dbReference>
<reference key="1">
    <citation type="journal article" date="2005" name="Nature">
        <title>The genome of the social amoeba Dictyostelium discoideum.</title>
        <authorList>
            <person name="Eichinger L."/>
            <person name="Pachebat J.A."/>
            <person name="Gloeckner G."/>
            <person name="Rajandream M.A."/>
            <person name="Sucgang R."/>
            <person name="Berriman M."/>
            <person name="Song J."/>
            <person name="Olsen R."/>
            <person name="Szafranski K."/>
            <person name="Xu Q."/>
            <person name="Tunggal B."/>
            <person name="Kummerfeld S."/>
            <person name="Madera M."/>
            <person name="Konfortov B.A."/>
            <person name="Rivero F."/>
            <person name="Bankier A.T."/>
            <person name="Lehmann R."/>
            <person name="Hamlin N."/>
            <person name="Davies R."/>
            <person name="Gaudet P."/>
            <person name="Fey P."/>
            <person name="Pilcher K."/>
            <person name="Chen G."/>
            <person name="Saunders D."/>
            <person name="Sodergren E.J."/>
            <person name="Davis P."/>
            <person name="Kerhornou A."/>
            <person name="Nie X."/>
            <person name="Hall N."/>
            <person name="Anjard C."/>
            <person name="Hemphill L."/>
            <person name="Bason N."/>
            <person name="Farbrother P."/>
            <person name="Desany B."/>
            <person name="Just E."/>
            <person name="Morio T."/>
            <person name="Rost R."/>
            <person name="Churcher C.M."/>
            <person name="Cooper J."/>
            <person name="Haydock S."/>
            <person name="van Driessche N."/>
            <person name="Cronin A."/>
            <person name="Goodhead I."/>
            <person name="Muzny D.M."/>
            <person name="Mourier T."/>
            <person name="Pain A."/>
            <person name="Lu M."/>
            <person name="Harper D."/>
            <person name="Lindsay R."/>
            <person name="Hauser H."/>
            <person name="James K.D."/>
            <person name="Quiles M."/>
            <person name="Madan Babu M."/>
            <person name="Saito T."/>
            <person name="Buchrieser C."/>
            <person name="Wardroper A."/>
            <person name="Felder M."/>
            <person name="Thangavelu M."/>
            <person name="Johnson D."/>
            <person name="Knights A."/>
            <person name="Loulseged H."/>
            <person name="Mungall K.L."/>
            <person name="Oliver K."/>
            <person name="Price C."/>
            <person name="Quail M.A."/>
            <person name="Urushihara H."/>
            <person name="Hernandez J."/>
            <person name="Rabbinowitsch E."/>
            <person name="Steffen D."/>
            <person name="Sanders M."/>
            <person name="Ma J."/>
            <person name="Kohara Y."/>
            <person name="Sharp S."/>
            <person name="Simmonds M.N."/>
            <person name="Spiegler S."/>
            <person name="Tivey A."/>
            <person name="Sugano S."/>
            <person name="White B."/>
            <person name="Walker D."/>
            <person name="Woodward J.R."/>
            <person name="Winckler T."/>
            <person name="Tanaka Y."/>
            <person name="Shaulsky G."/>
            <person name="Schleicher M."/>
            <person name="Weinstock G.M."/>
            <person name="Rosenthal A."/>
            <person name="Cox E.C."/>
            <person name="Chisholm R.L."/>
            <person name="Gibbs R.A."/>
            <person name="Loomis W.F."/>
            <person name="Platzer M."/>
            <person name="Kay R.R."/>
            <person name="Williams J.G."/>
            <person name="Dear P.H."/>
            <person name="Noegel A.A."/>
            <person name="Barrell B.G."/>
            <person name="Kuspa A."/>
        </authorList>
    </citation>
    <scope>NUCLEOTIDE SEQUENCE [LARGE SCALE GENOMIC DNA]</scope>
    <source>
        <strain>AX4</strain>
    </source>
</reference>
<feature type="chain" id="PRO_0000442006" description="WD repeat-containing protein DDB_G0349043">
    <location>
        <begin position="1"/>
        <end position="588"/>
    </location>
</feature>
<feature type="domain" description="LisH" evidence="3">
    <location>
        <begin position="40"/>
        <end position="72"/>
    </location>
</feature>
<feature type="domain" description="CTLH" evidence="2">
    <location>
        <begin position="73"/>
        <end position="129"/>
    </location>
</feature>
<feature type="repeat" description="WD 1" evidence="1">
    <location>
        <begin position="244"/>
        <end position="283"/>
    </location>
</feature>
<feature type="repeat" description="WD 2" evidence="1">
    <location>
        <begin position="294"/>
        <end position="333"/>
    </location>
</feature>
<feature type="repeat" description="WD 3" evidence="1">
    <location>
        <begin position="336"/>
        <end position="375"/>
    </location>
</feature>
<feature type="repeat" description="WD 4" evidence="1">
    <location>
        <begin position="413"/>
        <end position="452"/>
    </location>
</feature>
<feature type="repeat" description="WD 5" evidence="1">
    <location>
        <begin position="455"/>
        <end position="494"/>
    </location>
</feature>
<feature type="repeat" description="WD 6" evidence="1">
    <location>
        <begin position="499"/>
        <end position="539"/>
    </location>
</feature>
<feature type="repeat" description="WD 7" evidence="1">
    <location>
        <begin position="542"/>
        <end position="582"/>
    </location>
</feature>
<feature type="region of interest" description="Disordered" evidence="4">
    <location>
        <begin position="1"/>
        <end position="32"/>
    </location>
</feature>
<feature type="region of interest" description="Disordered" evidence="4">
    <location>
        <begin position="376"/>
        <end position="403"/>
    </location>
</feature>
<name>D9043_DICDI</name>
<proteinExistence type="predicted"/>
<sequence length="588" mass="67627">MPLDNKVQLNENGKEVNNNNNNDEDLKIQDNHNNKEPFFNRSELVRLLIQSLNSLGYDKSAEFLEKDSGISLQSKEINQFSECVVSGDWNKVEELLPFLKLNEFDTNNVKFLVYSQKFLEYLENHKIKEALECLRLEITPYTKDTSRLQVLTSLIMTSNSSETKKQIKQRSSRVNLLDDIRKYVNPNIMLPENRLEQLIKQSIQYQMGKCLYHNTSEQFINLFKDHTCDKSQMPLDVLFTLKDKHRDEIWFITFSHDGQRLASSSKDNTIIIWDMSTIYLDQPTEPKVMFILLGHTKEVSHLSWSPNDKYLLSASNDSTVKLWNTNDGTLLKTFTKHSDAVTCCGWHPDNKRFVSGGNDKNIYLWSIENLDLTNSNNNNNNHNNNNSNINGNSINGSNNNGNNNNNISPIKSWACARVNDLSIHKDGKQLIIICQEKKLRIYDLENEKTPEVVLMETDAITSMELSNDCNFALVNTSNQEIHLWDLEKQIIVQKYRGHKQGRFVIRSCFGGVDQAFVLSGSEDSTIYIWHRSSGILLETLSRHSGTVNTVCWSPCNPFIFCSASDDQTIKVWSRSNNHNSFINNLTNK</sequence>
<protein>
    <recommendedName>
        <fullName>WD repeat-containing protein DDB_G0349043</fullName>
    </recommendedName>
</protein>
<organism>
    <name type="scientific">Dictyostelium discoideum</name>
    <name type="common">Social amoeba</name>
    <dbReference type="NCBI Taxonomy" id="44689"/>
    <lineage>
        <taxon>Eukaryota</taxon>
        <taxon>Amoebozoa</taxon>
        <taxon>Evosea</taxon>
        <taxon>Eumycetozoa</taxon>
        <taxon>Dictyostelia</taxon>
        <taxon>Dictyosteliales</taxon>
        <taxon>Dictyosteliaceae</taxon>
        <taxon>Dictyostelium</taxon>
    </lineage>
</organism>
<evidence type="ECO:0000255" key="1"/>
<evidence type="ECO:0000255" key="2">
    <source>
        <dbReference type="PROSITE-ProRule" id="PRU00058"/>
    </source>
</evidence>
<evidence type="ECO:0000255" key="3">
    <source>
        <dbReference type="PROSITE-ProRule" id="PRU00126"/>
    </source>
</evidence>
<evidence type="ECO:0000256" key="4">
    <source>
        <dbReference type="SAM" id="MobiDB-lite"/>
    </source>
</evidence>
<keyword id="KW-1185">Reference proteome</keyword>
<keyword id="KW-0677">Repeat</keyword>
<keyword id="KW-0853">WD repeat</keyword>